<organism>
    <name type="scientific">Mycobacterium tuberculosis (strain ATCC 25618 / H37Rv)</name>
    <dbReference type="NCBI Taxonomy" id="83332"/>
    <lineage>
        <taxon>Bacteria</taxon>
        <taxon>Bacillati</taxon>
        <taxon>Actinomycetota</taxon>
        <taxon>Actinomycetes</taxon>
        <taxon>Mycobacteriales</taxon>
        <taxon>Mycobacteriaceae</taxon>
        <taxon>Mycobacterium</taxon>
        <taxon>Mycobacterium tuberculosis complex</taxon>
    </lineage>
</organism>
<dbReference type="EMBL" id="AL123456">
    <property type="protein sequence ID" value="CCP45354.1"/>
    <property type="molecule type" value="Genomic_DNA"/>
</dbReference>
<dbReference type="PIR" id="B70728">
    <property type="entry name" value="B70728"/>
</dbReference>
<dbReference type="RefSeq" id="NP_217074.1">
    <property type="nucleotide sequence ID" value="NC_000962.3"/>
</dbReference>
<dbReference type="RefSeq" id="WP_003413213.1">
    <property type="nucleotide sequence ID" value="NC_000962.3"/>
</dbReference>
<dbReference type="SMR" id="P9WLA3"/>
<dbReference type="STRING" id="83332.Rv2558"/>
<dbReference type="PaxDb" id="83332-Rv2558"/>
<dbReference type="DNASU" id="887298"/>
<dbReference type="GeneID" id="887298"/>
<dbReference type="KEGG" id="mtu:Rv2558"/>
<dbReference type="KEGG" id="mtv:RVBD_2558"/>
<dbReference type="PATRIC" id="fig|83332.111.peg.2859"/>
<dbReference type="TubercuList" id="Rv2558"/>
<dbReference type="eggNOG" id="COG1359">
    <property type="taxonomic scope" value="Bacteria"/>
</dbReference>
<dbReference type="InParanoid" id="P9WLA3"/>
<dbReference type="OrthoDB" id="5182530at2"/>
<dbReference type="Proteomes" id="UP000001584">
    <property type="component" value="Chromosome"/>
</dbReference>
<dbReference type="GO" id="GO:0009267">
    <property type="term" value="P:cellular response to starvation"/>
    <property type="evidence" value="ECO:0000270"/>
    <property type="project" value="MTBBASE"/>
</dbReference>
<dbReference type="InterPro" id="IPR011008">
    <property type="entry name" value="Dimeric_a/b-barrel"/>
</dbReference>
<dbReference type="SUPFAM" id="SSF54909">
    <property type="entry name" value="Dimeric alpha+beta barrel"/>
    <property type="match status" value="1"/>
</dbReference>
<proteinExistence type="evidence at protein level"/>
<comment type="similarity">
    <text evidence="1">To M.tuberculosis Rv2557.</text>
</comment>
<accession>P9WLA3</accession>
<accession>L0TBK3</accession>
<accession>P65005</accession>
<accession>Q50740</accession>
<reference key="1">
    <citation type="journal article" date="1998" name="Nature">
        <title>Deciphering the biology of Mycobacterium tuberculosis from the complete genome sequence.</title>
        <authorList>
            <person name="Cole S.T."/>
            <person name="Brosch R."/>
            <person name="Parkhill J."/>
            <person name="Garnier T."/>
            <person name="Churcher C.M."/>
            <person name="Harris D.E."/>
            <person name="Gordon S.V."/>
            <person name="Eiglmeier K."/>
            <person name="Gas S."/>
            <person name="Barry C.E. III"/>
            <person name="Tekaia F."/>
            <person name="Badcock K."/>
            <person name="Basham D."/>
            <person name="Brown D."/>
            <person name="Chillingworth T."/>
            <person name="Connor R."/>
            <person name="Davies R.M."/>
            <person name="Devlin K."/>
            <person name="Feltwell T."/>
            <person name="Gentles S."/>
            <person name="Hamlin N."/>
            <person name="Holroyd S."/>
            <person name="Hornsby T."/>
            <person name="Jagels K."/>
            <person name="Krogh A."/>
            <person name="McLean J."/>
            <person name="Moule S."/>
            <person name="Murphy L.D."/>
            <person name="Oliver S."/>
            <person name="Osborne J."/>
            <person name="Quail M.A."/>
            <person name="Rajandream M.A."/>
            <person name="Rogers J."/>
            <person name="Rutter S."/>
            <person name="Seeger K."/>
            <person name="Skelton S."/>
            <person name="Squares S."/>
            <person name="Squares R."/>
            <person name="Sulston J.E."/>
            <person name="Taylor K."/>
            <person name="Whitehead S."/>
            <person name="Barrell B.G."/>
        </authorList>
    </citation>
    <scope>NUCLEOTIDE SEQUENCE [LARGE SCALE GENOMIC DNA]</scope>
    <source>
        <strain>ATCC 25618 / H37Rv</strain>
    </source>
</reference>
<reference key="2">
    <citation type="journal article" date="2011" name="Mol. Cell. Proteomics">
        <title>Proteogenomic analysis of Mycobacterium tuberculosis by high resolution mass spectrometry.</title>
        <authorList>
            <person name="Kelkar D.S."/>
            <person name="Kumar D."/>
            <person name="Kumar P."/>
            <person name="Balakrishnan L."/>
            <person name="Muthusamy B."/>
            <person name="Yadav A.K."/>
            <person name="Shrivastava P."/>
            <person name="Marimuthu A."/>
            <person name="Anand S."/>
            <person name="Sundaram H."/>
            <person name="Kingsbury R."/>
            <person name="Harsha H.C."/>
            <person name="Nair B."/>
            <person name="Prasad T.S."/>
            <person name="Chauhan D.S."/>
            <person name="Katoch K."/>
            <person name="Katoch V.M."/>
            <person name="Kumar P."/>
            <person name="Chaerkady R."/>
            <person name="Ramachandran S."/>
            <person name="Dash D."/>
            <person name="Pandey A."/>
        </authorList>
    </citation>
    <scope>IDENTIFICATION BY MASS SPECTROMETRY [LARGE SCALE ANALYSIS]</scope>
    <source>
        <strain>ATCC 25618 / H37Rv</strain>
    </source>
</reference>
<keyword id="KW-1185">Reference proteome</keyword>
<feature type="chain" id="PRO_0000104037" description="Uncharacterized protein Rv2558">
    <location>
        <begin position="1"/>
        <end position="236"/>
    </location>
</feature>
<sequence length="236" mass="25718">MPGSAGWRKVFGGTGGATGALPRHGRGSIVYARSTTIEAQPLSVDIGIAHVRDVVMPALQEIDGCVGVSLLVDRQSGRCIATSAWETLEAMRASVERVAPIRDRAALMFAGSARVEEWDIALLHRDHPSHEGACVRATWLKVVPDQLGRSLEFYRTSVLPELESLDGFCSASLMVDHPACRRAVSCSTFDSMDAMARNRDRASELRSRRVRELGAEVLDVAEFELAIAHLRVPELV</sequence>
<gene>
    <name type="ordered locus">Rv2558</name>
    <name type="ORF">MTCY9C4.10c</name>
</gene>
<protein>
    <recommendedName>
        <fullName>Uncharacterized protein Rv2558</fullName>
    </recommendedName>
</protein>
<evidence type="ECO:0000305" key="1"/>
<name>Y2558_MYCTU</name>